<keyword id="KW-0687">Ribonucleoprotein</keyword>
<keyword id="KW-0689">Ribosomal protein</keyword>
<accession>A9W7T2</accession>
<organism>
    <name type="scientific">Methylorubrum extorquens (strain PA1)</name>
    <name type="common">Methylobacterium extorquens</name>
    <dbReference type="NCBI Taxonomy" id="419610"/>
    <lineage>
        <taxon>Bacteria</taxon>
        <taxon>Pseudomonadati</taxon>
        <taxon>Pseudomonadota</taxon>
        <taxon>Alphaproteobacteria</taxon>
        <taxon>Hyphomicrobiales</taxon>
        <taxon>Methylobacteriaceae</taxon>
        <taxon>Methylorubrum</taxon>
    </lineage>
</organism>
<protein>
    <recommendedName>
        <fullName evidence="1">Large ribosomal subunit protein bL32</fullName>
    </recommendedName>
    <alternativeName>
        <fullName evidence="3">50S ribosomal protein L32</fullName>
    </alternativeName>
</protein>
<gene>
    <name evidence="1" type="primary">rpmF</name>
    <name type="ordered locus">Mext_3466</name>
</gene>
<name>RL32_METEP</name>
<comment type="similarity">
    <text evidence="1">Belongs to the bacterial ribosomal protein bL32 family.</text>
</comment>
<proteinExistence type="inferred from homology"/>
<evidence type="ECO:0000255" key="1">
    <source>
        <dbReference type="HAMAP-Rule" id="MF_00340"/>
    </source>
</evidence>
<evidence type="ECO:0000256" key="2">
    <source>
        <dbReference type="SAM" id="MobiDB-lite"/>
    </source>
</evidence>
<evidence type="ECO:0000305" key="3"/>
<feature type="chain" id="PRO_1000120141" description="Large ribosomal subunit protein bL32">
    <location>
        <begin position="1"/>
        <end position="62"/>
    </location>
</feature>
<feature type="region of interest" description="Disordered" evidence="2">
    <location>
        <begin position="1"/>
        <end position="44"/>
    </location>
</feature>
<feature type="compositionally biased region" description="Basic residues" evidence="2">
    <location>
        <begin position="1"/>
        <end position="16"/>
    </location>
</feature>
<feature type="compositionally biased region" description="Basic and acidic residues" evidence="2">
    <location>
        <begin position="28"/>
        <end position="44"/>
    </location>
</feature>
<sequence length="62" mass="7035">MAVPKRKTSPSRRGMRRSADALKAPTYVEDKDSGELRRPHHIDLKTGMYRGRQVLKVKSAEA</sequence>
<dbReference type="EMBL" id="CP000908">
    <property type="protein sequence ID" value="ABY31851.1"/>
    <property type="molecule type" value="Genomic_DNA"/>
</dbReference>
<dbReference type="RefSeq" id="WP_003601373.1">
    <property type="nucleotide sequence ID" value="NC_010172.1"/>
</dbReference>
<dbReference type="SMR" id="A9W7T2"/>
<dbReference type="GeneID" id="96602163"/>
<dbReference type="KEGG" id="mex:Mext_3466"/>
<dbReference type="eggNOG" id="COG0333">
    <property type="taxonomic scope" value="Bacteria"/>
</dbReference>
<dbReference type="HOGENOM" id="CLU_129084_2_2_5"/>
<dbReference type="BioCyc" id="MEXT419610:MEXT_RS17395-MONOMER"/>
<dbReference type="GO" id="GO:0015934">
    <property type="term" value="C:large ribosomal subunit"/>
    <property type="evidence" value="ECO:0007669"/>
    <property type="project" value="InterPro"/>
</dbReference>
<dbReference type="GO" id="GO:0003735">
    <property type="term" value="F:structural constituent of ribosome"/>
    <property type="evidence" value="ECO:0007669"/>
    <property type="project" value="InterPro"/>
</dbReference>
<dbReference type="GO" id="GO:0006412">
    <property type="term" value="P:translation"/>
    <property type="evidence" value="ECO:0007669"/>
    <property type="project" value="UniProtKB-UniRule"/>
</dbReference>
<dbReference type="Gene3D" id="1.20.5.640">
    <property type="entry name" value="Single helix bin"/>
    <property type="match status" value="1"/>
</dbReference>
<dbReference type="HAMAP" id="MF_00340">
    <property type="entry name" value="Ribosomal_bL32"/>
    <property type="match status" value="1"/>
</dbReference>
<dbReference type="InterPro" id="IPR002677">
    <property type="entry name" value="Ribosomal_bL32"/>
</dbReference>
<dbReference type="InterPro" id="IPR044957">
    <property type="entry name" value="Ribosomal_bL32_bact"/>
</dbReference>
<dbReference type="InterPro" id="IPR011332">
    <property type="entry name" value="Ribosomal_zn-bd"/>
</dbReference>
<dbReference type="NCBIfam" id="TIGR01031">
    <property type="entry name" value="rpmF_bact"/>
    <property type="match status" value="1"/>
</dbReference>
<dbReference type="PANTHER" id="PTHR35534">
    <property type="entry name" value="50S RIBOSOMAL PROTEIN L32"/>
    <property type="match status" value="1"/>
</dbReference>
<dbReference type="PANTHER" id="PTHR35534:SF1">
    <property type="entry name" value="LARGE RIBOSOMAL SUBUNIT PROTEIN BL32"/>
    <property type="match status" value="1"/>
</dbReference>
<dbReference type="Pfam" id="PF01783">
    <property type="entry name" value="Ribosomal_L32p"/>
    <property type="match status" value="1"/>
</dbReference>
<dbReference type="SUPFAM" id="SSF57829">
    <property type="entry name" value="Zn-binding ribosomal proteins"/>
    <property type="match status" value="1"/>
</dbReference>
<reference key="1">
    <citation type="submission" date="2007-12" db="EMBL/GenBank/DDBJ databases">
        <title>Complete sequence of Methylobacterium extorquens PA1.</title>
        <authorList>
            <consortium name="US DOE Joint Genome Institute"/>
            <person name="Copeland A."/>
            <person name="Lucas S."/>
            <person name="Lapidus A."/>
            <person name="Barry K."/>
            <person name="Glavina del Rio T."/>
            <person name="Dalin E."/>
            <person name="Tice H."/>
            <person name="Pitluck S."/>
            <person name="Saunders E."/>
            <person name="Brettin T."/>
            <person name="Bruce D."/>
            <person name="Detter J.C."/>
            <person name="Han C."/>
            <person name="Schmutz J."/>
            <person name="Larimer F."/>
            <person name="Land M."/>
            <person name="Hauser L."/>
            <person name="Kyrpides N."/>
            <person name="Kim E."/>
            <person name="Marx C."/>
            <person name="Richardson P."/>
        </authorList>
    </citation>
    <scope>NUCLEOTIDE SEQUENCE [LARGE SCALE GENOMIC DNA]</scope>
    <source>
        <strain>PA1</strain>
    </source>
</reference>